<protein>
    <recommendedName>
        <fullName evidence="1">Chromosome partition protein Smc</fullName>
    </recommendedName>
</protein>
<keyword id="KW-0067">ATP-binding</keyword>
<keyword id="KW-0175">Coiled coil</keyword>
<keyword id="KW-0963">Cytoplasm</keyword>
<keyword id="KW-0238">DNA-binding</keyword>
<keyword id="KW-0547">Nucleotide-binding</keyword>
<keyword id="KW-1185">Reference proteome</keyword>
<reference key="1">
    <citation type="journal article" date="1998" name="Nature">
        <title>The complete genome of the hyperthermophilic bacterium Aquifex aeolicus.</title>
        <authorList>
            <person name="Deckert G."/>
            <person name="Warren P.V."/>
            <person name="Gaasterland T."/>
            <person name="Young W.G."/>
            <person name="Lenox A.L."/>
            <person name="Graham D.E."/>
            <person name="Overbeek R."/>
            <person name="Snead M.A."/>
            <person name="Keller M."/>
            <person name="Aujay M."/>
            <person name="Huber R."/>
            <person name="Feldman R.A."/>
            <person name="Short J.M."/>
            <person name="Olsen G.J."/>
            <person name="Swanson R.V."/>
        </authorList>
    </citation>
    <scope>NUCLEOTIDE SEQUENCE [LARGE SCALE GENOMIC DNA]</scope>
    <source>
        <strain>VF5</strain>
    </source>
</reference>
<organism>
    <name type="scientific">Aquifex aeolicus (strain VF5)</name>
    <dbReference type="NCBI Taxonomy" id="224324"/>
    <lineage>
        <taxon>Bacteria</taxon>
        <taxon>Pseudomonadati</taxon>
        <taxon>Aquificota</taxon>
        <taxon>Aquificia</taxon>
        <taxon>Aquificales</taxon>
        <taxon>Aquificaceae</taxon>
        <taxon>Aquifex</taxon>
    </lineage>
</organism>
<feature type="chain" id="PRO_0000409262" description="Chromosome partition protein Smc">
    <location>
        <begin position="1"/>
        <end position="1156"/>
    </location>
</feature>
<feature type="domain" description="SMC hinge">
    <location>
        <begin position="509"/>
        <end position="624"/>
    </location>
</feature>
<feature type="coiled-coil region" evidence="1">
    <location>
        <begin position="167"/>
        <end position="499"/>
    </location>
</feature>
<feature type="coiled-coil region" evidence="1">
    <location>
        <begin position="654"/>
        <end position="1001"/>
    </location>
</feature>
<feature type="binding site" evidence="1">
    <location>
        <begin position="37"/>
        <end position="44"/>
    </location>
    <ligand>
        <name>ATP</name>
        <dbReference type="ChEBI" id="CHEBI:30616"/>
    </ligand>
</feature>
<proteinExistence type="inferred from homology"/>
<sequence length="1156" mass="135564">MEKRAYIEKIVVEGFKSYGTKRKEIPLGEGFIAVVGPNGAGKSNIGDAISFALGLSSAKALRAKNLSYLIFSKNGQKADHAYVEVHFKNLGAFPVEDEEVVISRKVSKDGRSIFKINGQVVRERDLKDFLAKAGIYETAYNVVYQGDIVKFLKMTPVERRKIIEEISGIGEYERKKEKALEELAEVELKIKEIDLILEEISNQLKRLKEEKEKLEKFKELQRIKRETEAKILLKEKEKLLKERERILNELSSLRESLEDITFQIQENEKELNERERLLKEVNEKIMPFKEKVGKFTAEIENAERSIKEKERELKESENRVKNLEELINNLLSDKENLEREVGTLQLELEKLKEEYKSLKEVEREKLRELEEEEERLKITFDEVKKLEEEKEKLTEKLNSLNKEKQELEIQRANLKNKIERIKEDINKLISEREEKIKEIKEKEQEIKRLKAIKKKEEEELRNLTQELNIYEKRLSEVRKKLEEVLKEKGAIEREVRSFSDVSDVFKDIKGVYGSVSELIRVKNPEHITAIEVAGGGRLKFIVVEDEEVAKECIQLAKRMNLGRFSFIPLNRVRVEERPLRYPRTKGAVDFAVNLVEYDPKFEKVVKFVFGDTLIVENFESAKAIGIGNYRMVTLEGELFEKSGVITGGAVKPSGELNKRYYEEELQRLNAEEEKLKNEESIIQKKIREIRNLISEKTALLKVSERKIEELSSEGLEQYEEKFKEKLENSKEYLKILEEKLLNVEDKLKELAEEIEYYEEKLNNLKLKEGDIKRHYSREGVEEKRREYSKVRKQVSEIEKSLNEIERELNKKTYELEYLEKEIQEKEREREYLTERIKSLKKEIENLILFKEKTLQEVKEAEVKVYDYIKQKEELEKEILNLKSKLGKLKIKEEELKEKIFEKEKNLKVLEEKIENLNEELKEYEDLKLGADEESIPKLKEKLKRVTEEIQKLGSVNFRAEEDYAEELKRFNDYKEKQQKLKEESKAIKKLIEETENKKRKVFLEAFNQINKSLKRIFSFLSPGGKAQMFLDNPEDPFSGGVQLTVKPRGKDVQYLEAMSGGEKTLAALSLIFALQEYKPSPFYYFDEVDAHLDEVNAKKVGELIREKSKEAQFIVVTLREVVTSFADKIVGVSARGGISEVFFLKNEGLEEIIKEA</sequence>
<gene>
    <name evidence="1" type="primary">smc</name>
    <name type="synonym">xcpC</name>
    <name type="ordered locus">aq_629</name>
</gene>
<name>SMC_AQUAE</name>
<evidence type="ECO:0000255" key="1">
    <source>
        <dbReference type="HAMAP-Rule" id="MF_01894"/>
    </source>
</evidence>
<accession>O66878</accession>
<comment type="function">
    <text evidence="1">Required for chromosome condensation and partitioning.</text>
</comment>
<comment type="subunit">
    <text evidence="1">Homodimer.</text>
</comment>
<comment type="subcellular location">
    <subcellularLocation>
        <location evidence="1">Cytoplasm</location>
    </subcellularLocation>
</comment>
<comment type="domain">
    <text evidence="1">Contains large globular domains required for ATP hydrolysis at each terminus and a third globular domain forming a flexible SMC hinge near the middle of the molecule. These domains are separated by coiled-coil structures.</text>
</comment>
<comment type="similarity">
    <text evidence="1">Belongs to the SMC family.</text>
</comment>
<dbReference type="EMBL" id="AE000657">
    <property type="protein sequence ID" value="AAC06839.1"/>
    <property type="molecule type" value="Genomic_DNA"/>
</dbReference>
<dbReference type="PIR" id="B70356">
    <property type="entry name" value="B70356"/>
</dbReference>
<dbReference type="RefSeq" id="NP_213438.1">
    <property type="nucleotide sequence ID" value="NC_000918.1"/>
</dbReference>
<dbReference type="RefSeq" id="WP_010880376.1">
    <property type="nucleotide sequence ID" value="NC_000918.1"/>
</dbReference>
<dbReference type="SMR" id="O66878"/>
<dbReference type="STRING" id="224324.aq_629"/>
<dbReference type="EnsemblBacteria" id="AAC06839">
    <property type="protein sequence ID" value="AAC06839"/>
    <property type="gene ID" value="aq_629"/>
</dbReference>
<dbReference type="KEGG" id="aae:aq_629"/>
<dbReference type="PATRIC" id="fig|224324.8.peg.512"/>
<dbReference type="eggNOG" id="COG1196">
    <property type="taxonomic scope" value="Bacteria"/>
</dbReference>
<dbReference type="HOGENOM" id="CLU_001042_2_2_0"/>
<dbReference type="InParanoid" id="O66878"/>
<dbReference type="OrthoDB" id="9808768at2"/>
<dbReference type="Proteomes" id="UP000000798">
    <property type="component" value="Chromosome"/>
</dbReference>
<dbReference type="GO" id="GO:0005694">
    <property type="term" value="C:chromosome"/>
    <property type="evidence" value="ECO:0007669"/>
    <property type="project" value="InterPro"/>
</dbReference>
<dbReference type="GO" id="GO:0005737">
    <property type="term" value="C:cytoplasm"/>
    <property type="evidence" value="ECO:0007669"/>
    <property type="project" value="UniProtKB-SubCell"/>
</dbReference>
<dbReference type="GO" id="GO:0005524">
    <property type="term" value="F:ATP binding"/>
    <property type="evidence" value="ECO:0007669"/>
    <property type="project" value="UniProtKB-UniRule"/>
</dbReference>
<dbReference type="GO" id="GO:0016887">
    <property type="term" value="F:ATP hydrolysis activity"/>
    <property type="evidence" value="ECO:0007669"/>
    <property type="project" value="InterPro"/>
</dbReference>
<dbReference type="GO" id="GO:0003677">
    <property type="term" value="F:DNA binding"/>
    <property type="evidence" value="ECO:0007669"/>
    <property type="project" value="UniProtKB-UniRule"/>
</dbReference>
<dbReference type="GO" id="GO:0030261">
    <property type="term" value="P:chromosome condensation"/>
    <property type="evidence" value="ECO:0007669"/>
    <property type="project" value="InterPro"/>
</dbReference>
<dbReference type="GO" id="GO:0007059">
    <property type="term" value="P:chromosome segregation"/>
    <property type="evidence" value="ECO:0007669"/>
    <property type="project" value="UniProtKB-UniRule"/>
</dbReference>
<dbReference type="GO" id="GO:0006260">
    <property type="term" value="P:DNA replication"/>
    <property type="evidence" value="ECO:0007669"/>
    <property type="project" value="UniProtKB-UniRule"/>
</dbReference>
<dbReference type="GO" id="GO:0007062">
    <property type="term" value="P:sister chromatid cohesion"/>
    <property type="evidence" value="ECO:0007669"/>
    <property type="project" value="InterPro"/>
</dbReference>
<dbReference type="Gene3D" id="1.10.287.1490">
    <property type="match status" value="1"/>
</dbReference>
<dbReference type="Gene3D" id="1.20.1060.20">
    <property type="match status" value="1"/>
</dbReference>
<dbReference type="Gene3D" id="1.20.5.170">
    <property type="match status" value="1"/>
</dbReference>
<dbReference type="Gene3D" id="3.30.70.1620">
    <property type="match status" value="1"/>
</dbReference>
<dbReference type="Gene3D" id="3.40.50.300">
    <property type="entry name" value="P-loop containing nucleotide triphosphate hydrolases"/>
    <property type="match status" value="2"/>
</dbReference>
<dbReference type="HAMAP" id="MF_01894">
    <property type="entry name" value="Smc_prok"/>
    <property type="match status" value="1"/>
</dbReference>
<dbReference type="InterPro" id="IPR027417">
    <property type="entry name" value="P-loop_NTPase"/>
</dbReference>
<dbReference type="InterPro" id="IPR003395">
    <property type="entry name" value="RecF/RecN/SMC_N"/>
</dbReference>
<dbReference type="InterPro" id="IPR024704">
    <property type="entry name" value="SMC"/>
</dbReference>
<dbReference type="InterPro" id="IPR010935">
    <property type="entry name" value="SMC_hinge"/>
</dbReference>
<dbReference type="InterPro" id="IPR036277">
    <property type="entry name" value="SMC_hinge_sf"/>
</dbReference>
<dbReference type="InterPro" id="IPR011890">
    <property type="entry name" value="SMC_prok"/>
</dbReference>
<dbReference type="NCBIfam" id="TIGR02169">
    <property type="entry name" value="SMC_prok_A"/>
    <property type="match status" value="1"/>
</dbReference>
<dbReference type="NCBIfam" id="TIGR02168">
    <property type="entry name" value="SMC_prok_B"/>
    <property type="match status" value="1"/>
</dbReference>
<dbReference type="PANTHER" id="PTHR43977">
    <property type="entry name" value="STRUCTURAL MAINTENANCE OF CHROMOSOMES PROTEIN 3"/>
    <property type="match status" value="1"/>
</dbReference>
<dbReference type="Pfam" id="PF06470">
    <property type="entry name" value="SMC_hinge"/>
    <property type="match status" value="1"/>
</dbReference>
<dbReference type="Pfam" id="PF02463">
    <property type="entry name" value="SMC_N"/>
    <property type="match status" value="2"/>
</dbReference>
<dbReference type="PIRSF" id="PIRSF005719">
    <property type="entry name" value="SMC"/>
    <property type="match status" value="1"/>
</dbReference>
<dbReference type="SMART" id="SM00968">
    <property type="entry name" value="SMC_hinge"/>
    <property type="match status" value="1"/>
</dbReference>
<dbReference type="SUPFAM" id="SSF52540">
    <property type="entry name" value="P-loop containing nucleoside triphosphate hydrolases"/>
    <property type="match status" value="2"/>
</dbReference>
<dbReference type="SUPFAM" id="SSF75553">
    <property type="entry name" value="Smc hinge domain"/>
    <property type="match status" value="1"/>
</dbReference>